<dbReference type="EMBL" id="CP000884">
    <property type="protein sequence ID" value="ABX38063.1"/>
    <property type="molecule type" value="Genomic_DNA"/>
</dbReference>
<dbReference type="RefSeq" id="WP_012207232.1">
    <property type="nucleotide sequence ID" value="NC_010002.1"/>
</dbReference>
<dbReference type="SMR" id="A9BP18"/>
<dbReference type="STRING" id="398578.Daci_5434"/>
<dbReference type="GeneID" id="24114270"/>
<dbReference type="KEGG" id="dac:Daci_5434"/>
<dbReference type="eggNOG" id="COG1825">
    <property type="taxonomic scope" value="Bacteria"/>
</dbReference>
<dbReference type="HOGENOM" id="CLU_075939_0_1_4"/>
<dbReference type="Proteomes" id="UP000000784">
    <property type="component" value="Chromosome"/>
</dbReference>
<dbReference type="GO" id="GO:0022625">
    <property type="term" value="C:cytosolic large ribosomal subunit"/>
    <property type="evidence" value="ECO:0007669"/>
    <property type="project" value="TreeGrafter"/>
</dbReference>
<dbReference type="GO" id="GO:0008097">
    <property type="term" value="F:5S rRNA binding"/>
    <property type="evidence" value="ECO:0007669"/>
    <property type="project" value="InterPro"/>
</dbReference>
<dbReference type="GO" id="GO:0003735">
    <property type="term" value="F:structural constituent of ribosome"/>
    <property type="evidence" value="ECO:0007669"/>
    <property type="project" value="InterPro"/>
</dbReference>
<dbReference type="GO" id="GO:0006412">
    <property type="term" value="P:translation"/>
    <property type="evidence" value="ECO:0007669"/>
    <property type="project" value="UniProtKB-UniRule"/>
</dbReference>
<dbReference type="CDD" id="cd00495">
    <property type="entry name" value="Ribosomal_L25_TL5_CTC"/>
    <property type="match status" value="1"/>
</dbReference>
<dbReference type="Gene3D" id="2.170.120.20">
    <property type="entry name" value="Ribosomal protein L25, beta domain"/>
    <property type="match status" value="1"/>
</dbReference>
<dbReference type="Gene3D" id="2.40.240.10">
    <property type="entry name" value="Ribosomal Protein L25, Chain P"/>
    <property type="match status" value="1"/>
</dbReference>
<dbReference type="HAMAP" id="MF_01336">
    <property type="entry name" value="Ribosomal_bL25"/>
    <property type="match status" value="1"/>
</dbReference>
<dbReference type="HAMAP" id="MF_01334">
    <property type="entry name" value="Ribosomal_bL25_CTC"/>
    <property type="match status" value="1"/>
</dbReference>
<dbReference type="InterPro" id="IPR020056">
    <property type="entry name" value="Rbsml_bL25/Gln-tRNA_synth_N"/>
</dbReference>
<dbReference type="InterPro" id="IPR011035">
    <property type="entry name" value="Ribosomal_bL25/Gln-tRNA_synth"/>
</dbReference>
<dbReference type="InterPro" id="IPR020057">
    <property type="entry name" value="Ribosomal_bL25_b-dom"/>
</dbReference>
<dbReference type="InterPro" id="IPR037121">
    <property type="entry name" value="Ribosomal_bL25_C"/>
</dbReference>
<dbReference type="InterPro" id="IPR001021">
    <property type="entry name" value="Ribosomal_bL25_long"/>
</dbReference>
<dbReference type="InterPro" id="IPR020055">
    <property type="entry name" value="Ribosomal_bL25_short"/>
</dbReference>
<dbReference type="InterPro" id="IPR029751">
    <property type="entry name" value="Ribosomal_L25_dom"/>
</dbReference>
<dbReference type="InterPro" id="IPR020930">
    <property type="entry name" value="Ribosomal_uL5_bac-type"/>
</dbReference>
<dbReference type="NCBIfam" id="TIGR00731">
    <property type="entry name" value="bL25_bact_ctc"/>
    <property type="match status" value="1"/>
</dbReference>
<dbReference type="NCBIfam" id="NF004130">
    <property type="entry name" value="PRK05618.1-5"/>
    <property type="match status" value="1"/>
</dbReference>
<dbReference type="NCBIfam" id="NF004612">
    <property type="entry name" value="PRK05943.1"/>
    <property type="match status" value="1"/>
</dbReference>
<dbReference type="PANTHER" id="PTHR33284">
    <property type="entry name" value="RIBOSOMAL PROTEIN L25/GLN-TRNA SYNTHETASE, ANTI-CODON-BINDING DOMAIN-CONTAINING PROTEIN"/>
    <property type="match status" value="1"/>
</dbReference>
<dbReference type="PANTHER" id="PTHR33284:SF1">
    <property type="entry name" value="RIBOSOMAL PROTEIN L25_GLN-TRNA SYNTHETASE, ANTI-CODON-BINDING DOMAIN-CONTAINING PROTEIN"/>
    <property type="match status" value="1"/>
</dbReference>
<dbReference type="Pfam" id="PF01386">
    <property type="entry name" value="Ribosomal_L25p"/>
    <property type="match status" value="1"/>
</dbReference>
<dbReference type="Pfam" id="PF14693">
    <property type="entry name" value="Ribosomal_TL5_C"/>
    <property type="match status" value="1"/>
</dbReference>
<dbReference type="SUPFAM" id="SSF50715">
    <property type="entry name" value="Ribosomal protein L25-like"/>
    <property type="match status" value="1"/>
</dbReference>
<protein>
    <recommendedName>
        <fullName evidence="1">Large ribosomal subunit protein bL25</fullName>
    </recommendedName>
    <alternativeName>
        <fullName evidence="3">50S ribosomal protein L25</fullName>
    </alternativeName>
    <alternativeName>
        <fullName evidence="1">General stress protein CTC</fullName>
    </alternativeName>
</protein>
<reference key="1">
    <citation type="submission" date="2007-11" db="EMBL/GenBank/DDBJ databases">
        <title>Complete sequence of Delftia acidovorans DSM 14801 / SPH-1.</title>
        <authorList>
            <person name="Copeland A."/>
            <person name="Lucas S."/>
            <person name="Lapidus A."/>
            <person name="Barry K."/>
            <person name="Glavina del Rio T."/>
            <person name="Dalin E."/>
            <person name="Tice H."/>
            <person name="Pitluck S."/>
            <person name="Lowry S."/>
            <person name="Clum A."/>
            <person name="Schmutz J."/>
            <person name="Larimer F."/>
            <person name="Land M."/>
            <person name="Hauser L."/>
            <person name="Kyrpides N."/>
            <person name="Kim E."/>
            <person name="Schleheck D."/>
            <person name="Richardson P."/>
        </authorList>
    </citation>
    <scope>NUCLEOTIDE SEQUENCE [LARGE SCALE GENOMIC DNA]</scope>
    <source>
        <strain>DSM 14801 / SPH-1</strain>
    </source>
</reference>
<gene>
    <name evidence="1" type="primary">rplY</name>
    <name evidence="1" type="synonym">ctc</name>
    <name type="ordered locus">Daci_5434</name>
</gene>
<feature type="chain" id="PRO_1000142513" description="Large ribosomal subunit protein bL25">
    <location>
        <begin position="1"/>
        <end position="209"/>
    </location>
</feature>
<feature type="region of interest" description="Disordered" evidence="2">
    <location>
        <begin position="190"/>
        <end position="209"/>
    </location>
</feature>
<evidence type="ECO:0000255" key="1">
    <source>
        <dbReference type="HAMAP-Rule" id="MF_01334"/>
    </source>
</evidence>
<evidence type="ECO:0000256" key="2">
    <source>
        <dbReference type="SAM" id="MobiDB-lite"/>
    </source>
</evidence>
<evidence type="ECO:0000305" key="3"/>
<comment type="function">
    <text evidence="1">This is one of the proteins that binds to the 5S RNA in the ribosome where it forms part of the central protuberance.</text>
</comment>
<comment type="subunit">
    <text evidence="1">Part of the 50S ribosomal subunit; part of the 5S rRNA/L5/L18/L25 subcomplex. Contacts the 5S rRNA. Binds to the 5S rRNA independently of L5 and L18.</text>
</comment>
<comment type="similarity">
    <text evidence="1">Belongs to the bacterial ribosomal protein bL25 family. CTC subfamily.</text>
</comment>
<name>RL25_DELAS</name>
<organism>
    <name type="scientific">Delftia acidovorans (strain DSM 14801 / SPH-1)</name>
    <dbReference type="NCBI Taxonomy" id="398578"/>
    <lineage>
        <taxon>Bacteria</taxon>
        <taxon>Pseudomonadati</taxon>
        <taxon>Pseudomonadota</taxon>
        <taxon>Betaproteobacteria</taxon>
        <taxon>Burkholderiales</taxon>
        <taxon>Comamonadaceae</taxon>
        <taxon>Delftia</taxon>
    </lineage>
</organism>
<keyword id="KW-1185">Reference proteome</keyword>
<keyword id="KW-0687">Ribonucleoprotein</keyword>
<keyword id="KW-0689">Ribosomal protein</keyword>
<keyword id="KW-0694">RNA-binding</keyword>
<keyword id="KW-0699">rRNA-binding</keyword>
<proteinExistence type="inferred from homology"/>
<accession>A9BP18</accession>
<sequence>MQFVAFERAKQGTGASRRLRNSGKAPGIVYGGAAEAQLIEIDHNALWHALKKEVFHSSILDMEVNGQTSKVVLRDVQFHPYKQLILHVDFQRVDDKTKVHLKVPLHFEGMEQSQAVKVENCTITPLVHELDVVCMPAQLPEFITVDLSGLTSKSTLGLQGLKLPNGVKAVVRGSNKNPALISIKLPEVAPDASAAPVAAPAAPAKKGKK</sequence>